<evidence type="ECO:0000256" key="1">
    <source>
        <dbReference type="SAM" id="MobiDB-lite"/>
    </source>
</evidence>
<evidence type="ECO:0000269" key="2">
    <source ref="1"/>
</evidence>
<protein>
    <recommendedName>
        <fullName>Avenin</fullName>
    </recommendedName>
</protein>
<reference key="1">
    <citation type="journal article" date="1988" name="Biochem. Physiol. Pflanz.">
        <title>The nucleotide sequence of a cDNA for a major prolamin (avenin) in oat (Avena sativa L. cultivar Hinoat) which reveals homology with oat globulin.</title>
        <authorList>
            <person name="Fabijanski S."/>
            <person name="Chang S.-C."/>
            <person name="Dukiandjiev S."/>
            <person name="Bahramian M.B."/>
            <person name="Ferrara P."/>
            <person name="Altosaar I."/>
        </authorList>
    </citation>
    <scope>NUCLEOTIDE SEQUENCE [MRNA]</scope>
    <scope>PROTEIN SEQUENCE OF 29-47</scope>
    <source>
        <strain>cv. Hinoat</strain>
        <tissue>Endosperm</tissue>
    </source>
</reference>
<comment type="function">
    <text>Seed storage protein.</text>
</comment>
<dbReference type="EMBL" id="M38446">
    <property type="protein sequence ID" value="AAA32713.1"/>
    <property type="molecule type" value="mRNA"/>
</dbReference>
<dbReference type="PIR" id="S06455">
    <property type="entry name" value="S06455"/>
</dbReference>
<dbReference type="SMR" id="P27919"/>
<dbReference type="GO" id="GO:0045735">
    <property type="term" value="F:nutrient reservoir activity"/>
    <property type="evidence" value="ECO:0007669"/>
    <property type="project" value="UniProtKB-KW"/>
</dbReference>
<dbReference type="CDD" id="cd00261">
    <property type="entry name" value="AAI_SS"/>
    <property type="match status" value="1"/>
</dbReference>
<dbReference type="Gene3D" id="2.60.120.10">
    <property type="entry name" value="Jelly Rolls"/>
    <property type="match status" value="1"/>
</dbReference>
<dbReference type="Gene3D" id="1.10.110.10">
    <property type="entry name" value="Plant lipid-transfer and hydrophobic proteins"/>
    <property type="match status" value="1"/>
</dbReference>
<dbReference type="InterPro" id="IPR006044">
    <property type="entry name" value="11S_seedstore_pln"/>
</dbReference>
<dbReference type="InterPro" id="IPR036312">
    <property type="entry name" value="Bifun_inhib/LTP/seed_sf"/>
</dbReference>
<dbReference type="InterPro" id="IPR016140">
    <property type="entry name" value="Bifunc_inhib/LTP/seed_store"/>
</dbReference>
<dbReference type="InterPro" id="IPR001954">
    <property type="entry name" value="Glia_glutenin"/>
</dbReference>
<dbReference type="InterPro" id="IPR014710">
    <property type="entry name" value="RmlC-like_jellyroll"/>
</dbReference>
<dbReference type="InterPro" id="IPR011051">
    <property type="entry name" value="RmlC_Cupin_sf"/>
</dbReference>
<dbReference type="PANTHER" id="PTHR33454">
    <property type="entry name" value="PROLAMIN PPROL 14P"/>
    <property type="match status" value="1"/>
</dbReference>
<dbReference type="PANTHER" id="PTHR33454:SF10">
    <property type="entry name" value="PUROINDOLINE-B"/>
    <property type="match status" value="1"/>
</dbReference>
<dbReference type="Pfam" id="PF13016">
    <property type="entry name" value="Gliadin"/>
    <property type="match status" value="1"/>
</dbReference>
<dbReference type="PRINTS" id="PR00439">
    <property type="entry name" value="11SGLOBULIN"/>
</dbReference>
<dbReference type="SMART" id="SM00499">
    <property type="entry name" value="AAI"/>
    <property type="match status" value="1"/>
</dbReference>
<dbReference type="SUPFAM" id="SSF47699">
    <property type="entry name" value="Bifunctional inhibitor/lipid-transfer protein/seed storage 2S albumin"/>
    <property type="match status" value="1"/>
</dbReference>
<dbReference type="SUPFAM" id="SSF51182">
    <property type="entry name" value="RmlC-like cupins"/>
    <property type="match status" value="1"/>
</dbReference>
<feature type="signal peptide" evidence="2">
    <location>
        <begin position="1"/>
        <end position="28"/>
    </location>
</feature>
<feature type="chain" id="PRO_0000032283" description="Avenin">
    <location>
        <begin position="29"/>
        <end position="214"/>
    </location>
</feature>
<feature type="region of interest" description="Disordered" evidence="1">
    <location>
        <begin position="180"/>
        <end position="214"/>
    </location>
</feature>
<sequence>MKIFFFLALLALVVSATFAQYAESDGSYEEVEGSHDRCQQHQMKLDSCREYVAERCTTMRDFPITWPWKWWKGGCEELRNECCQLLGQMPSECRCDAIWRSIQRELGGFFGTQQGLIGKRLKIAKSLPTQSTWALSAISPNSMVSHIAGKSSILRALPVDVLANAYRISRQEARNLKNNRGQESGVFTPKFTQTSFQPYPEGEDESSLINKASE</sequence>
<proteinExistence type="evidence at protein level"/>
<accession>P27919</accession>
<name>AVEN_AVESA</name>
<keyword id="KW-0903">Direct protein sequencing</keyword>
<keyword id="KW-0708">Seed storage protein</keyword>
<keyword id="KW-0732">Signal</keyword>
<keyword id="KW-0758">Storage protein</keyword>
<organism>
    <name type="scientific">Avena sativa</name>
    <name type="common">Oat</name>
    <dbReference type="NCBI Taxonomy" id="4498"/>
    <lineage>
        <taxon>Eukaryota</taxon>
        <taxon>Viridiplantae</taxon>
        <taxon>Streptophyta</taxon>
        <taxon>Embryophyta</taxon>
        <taxon>Tracheophyta</taxon>
        <taxon>Spermatophyta</taxon>
        <taxon>Magnoliopsida</taxon>
        <taxon>Liliopsida</taxon>
        <taxon>Poales</taxon>
        <taxon>Poaceae</taxon>
        <taxon>BOP clade</taxon>
        <taxon>Pooideae</taxon>
        <taxon>Poodae</taxon>
        <taxon>Poeae</taxon>
        <taxon>Poeae Chloroplast Group 1 (Aveneae type)</taxon>
        <taxon>Aveninae</taxon>
        <taxon>Avena</taxon>
    </lineage>
</organism>